<name>RS4_PROA2</name>
<dbReference type="EMBL" id="CP001108">
    <property type="protein sequence ID" value="ACF47048.1"/>
    <property type="molecule type" value="Genomic_DNA"/>
</dbReference>
<dbReference type="RefSeq" id="WP_012506581.1">
    <property type="nucleotide sequence ID" value="NC_011059.1"/>
</dbReference>
<dbReference type="SMR" id="B4S5A2"/>
<dbReference type="STRING" id="290512.Paes_2038"/>
<dbReference type="KEGG" id="paa:Paes_2038"/>
<dbReference type="eggNOG" id="COG0522">
    <property type="taxonomic scope" value="Bacteria"/>
</dbReference>
<dbReference type="HOGENOM" id="CLU_092403_0_2_10"/>
<dbReference type="Proteomes" id="UP000002725">
    <property type="component" value="Chromosome"/>
</dbReference>
<dbReference type="GO" id="GO:0015935">
    <property type="term" value="C:small ribosomal subunit"/>
    <property type="evidence" value="ECO:0007669"/>
    <property type="project" value="InterPro"/>
</dbReference>
<dbReference type="GO" id="GO:0019843">
    <property type="term" value="F:rRNA binding"/>
    <property type="evidence" value="ECO:0007669"/>
    <property type="project" value="UniProtKB-UniRule"/>
</dbReference>
<dbReference type="GO" id="GO:0003735">
    <property type="term" value="F:structural constituent of ribosome"/>
    <property type="evidence" value="ECO:0007669"/>
    <property type="project" value="InterPro"/>
</dbReference>
<dbReference type="GO" id="GO:0042274">
    <property type="term" value="P:ribosomal small subunit biogenesis"/>
    <property type="evidence" value="ECO:0007669"/>
    <property type="project" value="TreeGrafter"/>
</dbReference>
<dbReference type="GO" id="GO:0006412">
    <property type="term" value="P:translation"/>
    <property type="evidence" value="ECO:0007669"/>
    <property type="project" value="UniProtKB-UniRule"/>
</dbReference>
<dbReference type="CDD" id="cd00165">
    <property type="entry name" value="S4"/>
    <property type="match status" value="1"/>
</dbReference>
<dbReference type="FunFam" id="3.10.290.10:FF:000001">
    <property type="entry name" value="30S ribosomal protein S4"/>
    <property type="match status" value="1"/>
</dbReference>
<dbReference type="Gene3D" id="1.10.1050.10">
    <property type="entry name" value="Ribosomal Protein S4 Delta 41, Chain A, domain 1"/>
    <property type="match status" value="1"/>
</dbReference>
<dbReference type="Gene3D" id="3.10.290.10">
    <property type="entry name" value="RNA-binding S4 domain"/>
    <property type="match status" value="1"/>
</dbReference>
<dbReference type="HAMAP" id="MF_01306_B">
    <property type="entry name" value="Ribosomal_uS4_B"/>
    <property type="match status" value="1"/>
</dbReference>
<dbReference type="InterPro" id="IPR022801">
    <property type="entry name" value="Ribosomal_uS4"/>
</dbReference>
<dbReference type="InterPro" id="IPR005709">
    <property type="entry name" value="Ribosomal_uS4_bac-type"/>
</dbReference>
<dbReference type="InterPro" id="IPR001912">
    <property type="entry name" value="Ribosomal_uS4_N"/>
</dbReference>
<dbReference type="InterPro" id="IPR002942">
    <property type="entry name" value="S4_RNA-bd"/>
</dbReference>
<dbReference type="InterPro" id="IPR036986">
    <property type="entry name" value="S4_RNA-bd_sf"/>
</dbReference>
<dbReference type="NCBIfam" id="NF003717">
    <property type="entry name" value="PRK05327.1"/>
    <property type="match status" value="1"/>
</dbReference>
<dbReference type="NCBIfam" id="TIGR01017">
    <property type="entry name" value="rpsD_bact"/>
    <property type="match status" value="1"/>
</dbReference>
<dbReference type="PANTHER" id="PTHR11831">
    <property type="entry name" value="30S 40S RIBOSOMAL PROTEIN"/>
    <property type="match status" value="1"/>
</dbReference>
<dbReference type="PANTHER" id="PTHR11831:SF4">
    <property type="entry name" value="SMALL RIBOSOMAL SUBUNIT PROTEIN US4M"/>
    <property type="match status" value="1"/>
</dbReference>
<dbReference type="Pfam" id="PF00163">
    <property type="entry name" value="Ribosomal_S4"/>
    <property type="match status" value="1"/>
</dbReference>
<dbReference type="Pfam" id="PF01479">
    <property type="entry name" value="S4"/>
    <property type="match status" value="1"/>
</dbReference>
<dbReference type="SMART" id="SM01390">
    <property type="entry name" value="Ribosomal_S4"/>
    <property type="match status" value="1"/>
</dbReference>
<dbReference type="SMART" id="SM00363">
    <property type="entry name" value="S4"/>
    <property type="match status" value="1"/>
</dbReference>
<dbReference type="SUPFAM" id="SSF55174">
    <property type="entry name" value="Alpha-L RNA-binding motif"/>
    <property type="match status" value="1"/>
</dbReference>
<dbReference type="PROSITE" id="PS50889">
    <property type="entry name" value="S4"/>
    <property type="match status" value="1"/>
</dbReference>
<sequence length="203" mass="23364">MARFRGSITKVSRRLGVALAPKAEKYLERRPYAPGEHGQSRRSKISEYALQLREKQKMKFLYGVLEKQFRNYYKKAVAQRGVTGDNLVKLLERRFDNVVFRAGFSPSRAGARQLVTHGHMLVNGRKVNIPSFLMKPGDAIEFREKSKNMDAVTESLNKAPESRIPSWIQVDKAHQKAVFLTVPEREEVQEPFNEQLVVELYSK</sequence>
<comment type="function">
    <text evidence="1">One of the primary rRNA binding proteins, it binds directly to 16S rRNA where it nucleates assembly of the body of the 30S subunit.</text>
</comment>
<comment type="function">
    <text evidence="1">With S5 and S12 plays an important role in translational accuracy.</text>
</comment>
<comment type="subunit">
    <text evidence="1">Part of the 30S ribosomal subunit. Contacts protein S5. The interaction surface between S4 and S5 is involved in control of translational fidelity.</text>
</comment>
<comment type="similarity">
    <text evidence="1">Belongs to the universal ribosomal protein uS4 family.</text>
</comment>
<feature type="chain" id="PRO_1000140774" description="Small ribosomal subunit protein uS4">
    <location>
        <begin position="1"/>
        <end position="203"/>
    </location>
</feature>
<feature type="domain" description="S4 RNA-binding" evidence="1">
    <location>
        <begin position="93"/>
        <end position="154"/>
    </location>
</feature>
<evidence type="ECO:0000255" key="1">
    <source>
        <dbReference type="HAMAP-Rule" id="MF_01306"/>
    </source>
</evidence>
<evidence type="ECO:0000305" key="2"/>
<proteinExistence type="inferred from homology"/>
<reference key="1">
    <citation type="submission" date="2008-06" db="EMBL/GenBank/DDBJ databases">
        <title>Complete sequence of chromosome of Prosthecochloris aestuarii DSM 271.</title>
        <authorList>
            <consortium name="US DOE Joint Genome Institute"/>
            <person name="Lucas S."/>
            <person name="Copeland A."/>
            <person name="Lapidus A."/>
            <person name="Glavina del Rio T."/>
            <person name="Dalin E."/>
            <person name="Tice H."/>
            <person name="Bruce D."/>
            <person name="Goodwin L."/>
            <person name="Pitluck S."/>
            <person name="Schmutz J."/>
            <person name="Larimer F."/>
            <person name="Land M."/>
            <person name="Hauser L."/>
            <person name="Kyrpides N."/>
            <person name="Anderson I."/>
            <person name="Liu Z."/>
            <person name="Li T."/>
            <person name="Zhao F."/>
            <person name="Overmann J."/>
            <person name="Bryant D.A."/>
            <person name="Richardson P."/>
        </authorList>
    </citation>
    <scope>NUCLEOTIDE SEQUENCE [LARGE SCALE GENOMIC DNA]</scope>
    <source>
        <strain>DSM 271 / SK 413</strain>
    </source>
</reference>
<organism>
    <name type="scientific">Prosthecochloris aestuarii (strain DSM 271 / SK 413)</name>
    <dbReference type="NCBI Taxonomy" id="290512"/>
    <lineage>
        <taxon>Bacteria</taxon>
        <taxon>Pseudomonadati</taxon>
        <taxon>Chlorobiota</taxon>
        <taxon>Chlorobiia</taxon>
        <taxon>Chlorobiales</taxon>
        <taxon>Chlorobiaceae</taxon>
        <taxon>Prosthecochloris</taxon>
    </lineage>
</organism>
<gene>
    <name evidence="1" type="primary">rpsD</name>
    <name type="ordered locus">Paes_2038</name>
</gene>
<accession>B4S5A2</accession>
<protein>
    <recommendedName>
        <fullName evidence="1">Small ribosomal subunit protein uS4</fullName>
    </recommendedName>
    <alternativeName>
        <fullName evidence="2">30S ribosomal protein S4</fullName>
    </alternativeName>
</protein>
<keyword id="KW-0687">Ribonucleoprotein</keyword>
<keyword id="KW-0689">Ribosomal protein</keyword>
<keyword id="KW-0694">RNA-binding</keyword>
<keyword id="KW-0699">rRNA-binding</keyword>